<evidence type="ECO:0000255" key="1">
    <source>
        <dbReference type="HAMAP-Rule" id="MF_00184"/>
    </source>
</evidence>
<evidence type="ECO:0000255" key="2">
    <source>
        <dbReference type="PROSITE-ProRule" id="PRU01228"/>
    </source>
</evidence>
<proteinExistence type="inferred from homology"/>
<sequence>MSISITLHRSGTSRTQQVDTTTTGLDLFGSDRAVVAMRVDGNLVDLQRELHDGAEVEPVEATSEDGLNIIRHSATHVMAQAVQQLYPEVNLGIGPFITDGFYYDFGNIEPVTPEVLSELEKRMKRIVKENQRFVRRVTTEESAREELADQPYKLELIGTKGKGAEGASVEVGGGELTIYDNVRRNGEVAWKDLCRGPHVPSTKYLANTFALTKFSAAYWKGDQANDQLQRIYGTAWASREGLAAYQQRIKEAERRDHRKLGAELDLFSFPEEIGPGLVVFHPKGAMLRHLIEEHVIARHMEAGFNFVHTPEITKGGLFHTSGHLPYYADTMFPPMLVDEERDEEGNVTRAGQEYYLKAMNCPMHNLIFRSRGRSYRELPLRFFEMGHDYRYEKSGVVHGLTRMRGFAQDDSHTYCTREQAPGEIKKQIEFFLSILADFGLNDFYLELSTRESDSAKKEKFIGSDEDWQVATDTLDQVCRSTGLQLVPDPGGAAFYGPKVSVQVRDAIGRTWQMSTIQYDFNQPERFDLEYAAADGTHQRPIMLHSAKLGSVERFIGVLTEHYAGAFPVWLSPVQVRLVPVAEAFNDYVTGFAEVLGSRGIRVETDLSSDRFGKKIRNASKDKVPFILIAGGEDAEAGAVSFRLRDGSQVNGVVLDEAVRIIAAWDSRHRNDDPTAETLRGVVDD</sequence>
<dbReference type="EC" id="6.1.1.3" evidence="1"/>
<dbReference type="EMBL" id="AE017283">
    <property type="protein sequence ID" value="AAT82823.1"/>
    <property type="molecule type" value="Genomic_DNA"/>
</dbReference>
<dbReference type="SMR" id="Q6A8U3"/>
<dbReference type="EnsemblBacteria" id="AAT82823">
    <property type="protein sequence ID" value="AAT82823"/>
    <property type="gene ID" value="PPA1076"/>
</dbReference>
<dbReference type="KEGG" id="pac:PPA1076"/>
<dbReference type="eggNOG" id="COG0441">
    <property type="taxonomic scope" value="Bacteria"/>
</dbReference>
<dbReference type="HOGENOM" id="CLU_008554_0_1_11"/>
<dbReference type="Proteomes" id="UP000000603">
    <property type="component" value="Chromosome"/>
</dbReference>
<dbReference type="GO" id="GO:0005737">
    <property type="term" value="C:cytoplasm"/>
    <property type="evidence" value="ECO:0007669"/>
    <property type="project" value="UniProtKB-SubCell"/>
</dbReference>
<dbReference type="GO" id="GO:0005524">
    <property type="term" value="F:ATP binding"/>
    <property type="evidence" value="ECO:0007669"/>
    <property type="project" value="UniProtKB-UniRule"/>
</dbReference>
<dbReference type="GO" id="GO:0046872">
    <property type="term" value="F:metal ion binding"/>
    <property type="evidence" value="ECO:0007669"/>
    <property type="project" value="UniProtKB-KW"/>
</dbReference>
<dbReference type="GO" id="GO:0004829">
    <property type="term" value="F:threonine-tRNA ligase activity"/>
    <property type="evidence" value="ECO:0007669"/>
    <property type="project" value="UniProtKB-UniRule"/>
</dbReference>
<dbReference type="GO" id="GO:0000049">
    <property type="term" value="F:tRNA binding"/>
    <property type="evidence" value="ECO:0007669"/>
    <property type="project" value="UniProtKB-KW"/>
</dbReference>
<dbReference type="GO" id="GO:0006435">
    <property type="term" value="P:threonyl-tRNA aminoacylation"/>
    <property type="evidence" value="ECO:0007669"/>
    <property type="project" value="UniProtKB-UniRule"/>
</dbReference>
<dbReference type="CDD" id="cd01667">
    <property type="entry name" value="TGS_ThrRS"/>
    <property type="match status" value="1"/>
</dbReference>
<dbReference type="CDD" id="cd00860">
    <property type="entry name" value="ThrRS_anticodon"/>
    <property type="match status" value="1"/>
</dbReference>
<dbReference type="CDD" id="cd00771">
    <property type="entry name" value="ThrRS_core"/>
    <property type="match status" value="1"/>
</dbReference>
<dbReference type="FunFam" id="3.30.54.20:FF:000003">
    <property type="entry name" value="Threonine--tRNA ligase"/>
    <property type="match status" value="1"/>
</dbReference>
<dbReference type="FunFam" id="3.30.930.10:FF:000019">
    <property type="entry name" value="Threonine--tRNA ligase"/>
    <property type="match status" value="1"/>
</dbReference>
<dbReference type="FunFam" id="3.40.50.800:FF:000001">
    <property type="entry name" value="Threonine--tRNA ligase"/>
    <property type="match status" value="1"/>
</dbReference>
<dbReference type="Gene3D" id="3.30.54.20">
    <property type="match status" value="1"/>
</dbReference>
<dbReference type="Gene3D" id="3.40.50.800">
    <property type="entry name" value="Anticodon-binding domain"/>
    <property type="match status" value="1"/>
</dbReference>
<dbReference type="Gene3D" id="3.30.930.10">
    <property type="entry name" value="Bira Bifunctional Protein, Domain 2"/>
    <property type="match status" value="1"/>
</dbReference>
<dbReference type="Gene3D" id="3.30.980.10">
    <property type="entry name" value="Threonyl-trna Synthetase, Chain A, domain 2"/>
    <property type="match status" value="1"/>
</dbReference>
<dbReference type="HAMAP" id="MF_00184">
    <property type="entry name" value="Thr_tRNA_synth"/>
    <property type="match status" value="1"/>
</dbReference>
<dbReference type="InterPro" id="IPR002314">
    <property type="entry name" value="aa-tRNA-synt_IIb"/>
</dbReference>
<dbReference type="InterPro" id="IPR006195">
    <property type="entry name" value="aa-tRNA-synth_II"/>
</dbReference>
<dbReference type="InterPro" id="IPR045864">
    <property type="entry name" value="aa-tRNA-synth_II/BPL/LPL"/>
</dbReference>
<dbReference type="InterPro" id="IPR004154">
    <property type="entry name" value="Anticodon-bd"/>
</dbReference>
<dbReference type="InterPro" id="IPR036621">
    <property type="entry name" value="Anticodon-bd_dom_sf"/>
</dbReference>
<dbReference type="InterPro" id="IPR004095">
    <property type="entry name" value="TGS"/>
</dbReference>
<dbReference type="InterPro" id="IPR002320">
    <property type="entry name" value="Thr-tRNA-ligase_IIa"/>
</dbReference>
<dbReference type="InterPro" id="IPR018163">
    <property type="entry name" value="Thr/Ala-tRNA-synth_IIc_edit"/>
</dbReference>
<dbReference type="InterPro" id="IPR047246">
    <property type="entry name" value="ThrRS_anticodon"/>
</dbReference>
<dbReference type="InterPro" id="IPR033728">
    <property type="entry name" value="ThrRS_core"/>
</dbReference>
<dbReference type="InterPro" id="IPR012947">
    <property type="entry name" value="tRNA_SAD"/>
</dbReference>
<dbReference type="NCBIfam" id="TIGR00418">
    <property type="entry name" value="thrS"/>
    <property type="match status" value="1"/>
</dbReference>
<dbReference type="PANTHER" id="PTHR11451:SF44">
    <property type="entry name" value="THREONINE--TRNA LIGASE, CHLOROPLASTIC_MITOCHONDRIAL 2"/>
    <property type="match status" value="1"/>
</dbReference>
<dbReference type="PANTHER" id="PTHR11451">
    <property type="entry name" value="THREONINE-TRNA LIGASE"/>
    <property type="match status" value="1"/>
</dbReference>
<dbReference type="Pfam" id="PF03129">
    <property type="entry name" value="HGTP_anticodon"/>
    <property type="match status" value="1"/>
</dbReference>
<dbReference type="Pfam" id="PF00587">
    <property type="entry name" value="tRNA-synt_2b"/>
    <property type="match status" value="1"/>
</dbReference>
<dbReference type="Pfam" id="PF07973">
    <property type="entry name" value="tRNA_SAD"/>
    <property type="match status" value="1"/>
</dbReference>
<dbReference type="PRINTS" id="PR01047">
    <property type="entry name" value="TRNASYNTHTHR"/>
</dbReference>
<dbReference type="SMART" id="SM00863">
    <property type="entry name" value="tRNA_SAD"/>
    <property type="match status" value="1"/>
</dbReference>
<dbReference type="SUPFAM" id="SSF52954">
    <property type="entry name" value="Class II aaRS ABD-related"/>
    <property type="match status" value="1"/>
</dbReference>
<dbReference type="SUPFAM" id="SSF55681">
    <property type="entry name" value="Class II aaRS and biotin synthetases"/>
    <property type="match status" value="1"/>
</dbReference>
<dbReference type="SUPFAM" id="SSF55186">
    <property type="entry name" value="ThrRS/AlaRS common domain"/>
    <property type="match status" value="1"/>
</dbReference>
<dbReference type="PROSITE" id="PS50862">
    <property type="entry name" value="AA_TRNA_LIGASE_II"/>
    <property type="match status" value="1"/>
</dbReference>
<dbReference type="PROSITE" id="PS51880">
    <property type="entry name" value="TGS"/>
    <property type="match status" value="1"/>
</dbReference>
<feature type="chain" id="PRO_0000101023" description="Threonine--tRNA ligase">
    <location>
        <begin position="1"/>
        <end position="684"/>
    </location>
</feature>
<feature type="domain" description="TGS" evidence="2">
    <location>
        <begin position="1"/>
        <end position="60"/>
    </location>
</feature>
<feature type="region of interest" description="Catalytic" evidence="1">
    <location>
        <begin position="256"/>
        <end position="567"/>
    </location>
</feature>
<feature type="binding site" evidence="1">
    <location>
        <position position="361"/>
    </location>
    <ligand>
        <name>Zn(2+)</name>
        <dbReference type="ChEBI" id="CHEBI:29105"/>
    </ligand>
</feature>
<feature type="binding site" evidence="1">
    <location>
        <position position="412"/>
    </location>
    <ligand>
        <name>Zn(2+)</name>
        <dbReference type="ChEBI" id="CHEBI:29105"/>
    </ligand>
</feature>
<feature type="binding site" evidence="1">
    <location>
        <position position="544"/>
    </location>
    <ligand>
        <name>Zn(2+)</name>
        <dbReference type="ChEBI" id="CHEBI:29105"/>
    </ligand>
</feature>
<comment type="function">
    <text evidence="1">Catalyzes the attachment of threonine to tRNA(Thr) in a two-step reaction: L-threonine is first activated by ATP to form Thr-AMP and then transferred to the acceptor end of tRNA(Thr). Also edits incorrectly charged L-seryl-tRNA(Thr).</text>
</comment>
<comment type="catalytic activity">
    <reaction evidence="1">
        <text>tRNA(Thr) + L-threonine + ATP = L-threonyl-tRNA(Thr) + AMP + diphosphate + H(+)</text>
        <dbReference type="Rhea" id="RHEA:24624"/>
        <dbReference type="Rhea" id="RHEA-COMP:9670"/>
        <dbReference type="Rhea" id="RHEA-COMP:9704"/>
        <dbReference type="ChEBI" id="CHEBI:15378"/>
        <dbReference type="ChEBI" id="CHEBI:30616"/>
        <dbReference type="ChEBI" id="CHEBI:33019"/>
        <dbReference type="ChEBI" id="CHEBI:57926"/>
        <dbReference type="ChEBI" id="CHEBI:78442"/>
        <dbReference type="ChEBI" id="CHEBI:78534"/>
        <dbReference type="ChEBI" id="CHEBI:456215"/>
        <dbReference type="EC" id="6.1.1.3"/>
    </reaction>
</comment>
<comment type="cofactor">
    <cofactor evidence="1">
        <name>Zn(2+)</name>
        <dbReference type="ChEBI" id="CHEBI:29105"/>
    </cofactor>
    <text evidence="1">Binds 1 zinc ion per subunit.</text>
</comment>
<comment type="subunit">
    <text evidence="1">Homodimer.</text>
</comment>
<comment type="subcellular location">
    <subcellularLocation>
        <location evidence="1">Cytoplasm</location>
    </subcellularLocation>
</comment>
<comment type="similarity">
    <text evidence="1">Belongs to the class-II aminoacyl-tRNA synthetase family.</text>
</comment>
<name>SYT_CUTAK</name>
<gene>
    <name evidence="1" type="primary">thrS</name>
    <name type="ordered locus">PPA1076</name>
</gene>
<organism>
    <name type="scientific">Cutibacterium acnes (strain DSM 16379 / KPA171202)</name>
    <name type="common">Propionibacterium acnes</name>
    <dbReference type="NCBI Taxonomy" id="267747"/>
    <lineage>
        <taxon>Bacteria</taxon>
        <taxon>Bacillati</taxon>
        <taxon>Actinomycetota</taxon>
        <taxon>Actinomycetes</taxon>
        <taxon>Propionibacteriales</taxon>
        <taxon>Propionibacteriaceae</taxon>
        <taxon>Cutibacterium</taxon>
    </lineage>
</organism>
<protein>
    <recommendedName>
        <fullName evidence="1">Threonine--tRNA ligase</fullName>
        <ecNumber evidence="1">6.1.1.3</ecNumber>
    </recommendedName>
    <alternativeName>
        <fullName evidence="1">Threonyl-tRNA synthetase</fullName>
        <shortName evidence="1">ThrRS</shortName>
    </alternativeName>
</protein>
<reference key="1">
    <citation type="journal article" date="2004" name="Science">
        <title>The complete genome sequence of Propionibacterium acnes, a commensal of human skin.</title>
        <authorList>
            <person name="Brueggemann H."/>
            <person name="Henne A."/>
            <person name="Hoster F."/>
            <person name="Liesegang H."/>
            <person name="Wiezer A."/>
            <person name="Strittmatter A."/>
            <person name="Hujer S."/>
            <person name="Duerre P."/>
            <person name="Gottschalk G."/>
        </authorList>
    </citation>
    <scope>NUCLEOTIDE SEQUENCE [LARGE SCALE GENOMIC DNA]</scope>
    <source>
        <strain>DSM 16379 / KPA171202</strain>
    </source>
</reference>
<accession>Q6A8U3</accession>
<keyword id="KW-0030">Aminoacyl-tRNA synthetase</keyword>
<keyword id="KW-0067">ATP-binding</keyword>
<keyword id="KW-0963">Cytoplasm</keyword>
<keyword id="KW-0436">Ligase</keyword>
<keyword id="KW-0479">Metal-binding</keyword>
<keyword id="KW-0547">Nucleotide-binding</keyword>
<keyword id="KW-0648">Protein biosynthesis</keyword>
<keyword id="KW-0694">RNA-binding</keyword>
<keyword id="KW-0820">tRNA-binding</keyword>
<keyword id="KW-0862">Zinc</keyword>